<proteinExistence type="evidence at protein level"/>
<organism>
    <name type="scientific">Crotalus durissus cumanensis</name>
    <name type="common">South American rattlesnake</name>
    <dbReference type="NCBI Taxonomy" id="184542"/>
    <lineage>
        <taxon>Eukaryota</taxon>
        <taxon>Metazoa</taxon>
        <taxon>Chordata</taxon>
        <taxon>Craniata</taxon>
        <taxon>Vertebrata</taxon>
        <taxon>Euteleostomi</taxon>
        <taxon>Lepidosauria</taxon>
        <taxon>Squamata</taxon>
        <taxon>Bifurcata</taxon>
        <taxon>Unidentata</taxon>
        <taxon>Episquamata</taxon>
        <taxon>Toxicofera</taxon>
        <taxon>Serpentes</taxon>
        <taxon>Colubroidea</taxon>
        <taxon>Viperidae</taxon>
        <taxon>Crotalinae</taxon>
        <taxon>Crotalus</taxon>
    </lineage>
</organism>
<accession>K9N7B7</accession>
<comment type="function">
    <text evidence="5">Catalyzes an oxidative deamination of predominantly hydrophobic and aromatic L-amino acids, thus producing hydrogen peroxide that may contribute to the diverse toxic effects of this enzyme (PubMed:23287728). Shows activity on L-Leu (PubMed:23287728). Damages cell membranes of the Gram-positive bacteria S.aureus (MIC=8 ug/ml and MBC=16 ug/ml) and the Gram-negative bacteria A.baumannii (MIC=16 ug/ml and MBC=32 ug/ml). This antimicrobial activity is dependent on the production of hydrogen peroxyde, since it is inhibited by catalase, a hydrogen peroxyde scavenger.</text>
</comment>
<comment type="catalytic activity">
    <reaction evidence="5">
        <text>an L-alpha-amino acid + O2 + H2O = a 2-oxocarboxylate + H2O2 + NH4(+)</text>
        <dbReference type="Rhea" id="RHEA:13781"/>
        <dbReference type="ChEBI" id="CHEBI:15377"/>
        <dbReference type="ChEBI" id="CHEBI:15379"/>
        <dbReference type="ChEBI" id="CHEBI:16240"/>
        <dbReference type="ChEBI" id="CHEBI:28938"/>
        <dbReference type="ChEBI" id="CHEBI:35179"/>
        <dbReference type="ChEBI" id="CHEBI:59869"/>
        <dbReference type="EC" id="1.4.3.2"/>
    </reaction>
</comment>
<comment type="catalytic activity">
    <reaction evidence="5">
        <text>L-leucine + O2 + H2O = 4-methyl-2-oxopentanoate + H2O2 + NH4(+)</text>
        <dbReference type="Rhea" id="RHEA:60996"/>
        <dbReference type="ChEBI" id="CHEBI:15377"/>
        <dbReference type="ChEBI" id="CHEBI:15379"/>
        <dbReference type="ChEBI" id="CHEBI:16240"/>
        <dbReference type="ChEBI" id="CHEBI:17865"/>
        <dbReference type="ChEBI" id="CHEBI:28938"/>
        <dbReference type="ChEBI" id="CHEBI:57427"/>
    </reaction>
</comment>
<comment type="cofactor">
    <cofactor evidence="2">
        <name>FAD</name>
        <dbReference type="ChEBI" id="CHEBI:57692"/>
    </cofactor>
</comment>
<comment type="biophysicochemical properties">
    <kinetics>
        <KM evidence="5">9.23 uM for L-Leu</KM>
        <Vmax evidence="5">0.46 uM/min/mg enzyme for L-Leu</Vmax>
    </kinetics>
</comment>
<comment type="subunit">
    <text evidence="9">Monomer. This is in contrast with most of its orthologs, that are non-covalently linked homodimers.</text>
</comment>
<comment type="subcellular location">
    <subcellularLocation>
        <location evidence="4">Secreted</location>
    </subcellularLocation>
</comment>
<comment type="tissue specificity">
    <text evidence="8">Expressed by the venom gland.</text>
</comment>
<comment type="miscellaneous">
    <text evidence="5">Negative results: does not show antimicrobial activities against E.coli. Does not induce cytotoxicity toward C2C12 cells (at 40 ug/ml) and peripheral blood mononuclear cells (up to 200 ug/ml).</text>
</comment>
<comment type="similarity">
    <text evidence="1">Belongs to the flavin monoamine oxidase family. FIG1 subfamily.</text>
</comment>
<dbReference type="EC" id="1.4.3.2" evidence="5"/>
<dbReference type="EMBL" id="KC154267">
    <property type="protein sequence ID" value="AFY13334.1"/>
    <property type="molecule type" value="mRNA"/>
</dbReference>
<dbReference type="SMR" id="K9N7B7"/>
<dbReference type="SABIO-RK" id="K9N7B7"/>
<dbReference type="GO" id="GO:0005576">
    <property type="term" value="C:extracellular region"/>
    <property type="evidence" value="ECO:0007669"/>
    <property type="project" value="UniProtKB-SubCell"/>
</dbReference>
<dbReference type="GO" id="GO:0001716">
    <property type="term" value="F:L-amino-acid oxidase activity"/>
    <property type="evidence" value="ECO:0007669"/>
    <property type="project" value="UniProtKB-EC"/>
</dbReference>
<dbReference type="GO" id="GO:0009063">
    <property type="term" value="P:amino acid catabolic process"/>
    <property type="evidence" value="ECO:0007669"/>
    <property type="project" value="TreeGrafter"/>
</dbReference>
<dbReference type="GO" id="GO:0042742">
    <property type="term" value="P:defense response to bacterium"/>
    <property type="evidence" value="ECO:0007669"/>
    <property type="project" value="UniProtKB-KW"/>
</dbReference>
<dbReference type="FunFam" id="1.10.405.10:FF:000004">
    <property type="entry name" value="Amine oxidase"/>
    <property type="match status" value="1"/>
</dbReference>
<dbReference type="FunFam" id="3.50.50.60:FF:000450">
    <property type="entry name" value="Amine oxidase"/>
    <property type="match status" value="1"/>
</dbReference>
<dbReference type="Gene3D" id="3.90.660.10">
    <property type="match status" value="1"/>
</dbReference>
<dbReference type="Gene3D" id="3.50.50.60">
    <property type="entry name" value="FAD/NAD(P)-binding domain"/>
    <property type="match status" value="1"/>
</dbReference>
<dbReference type="Gene3D" id="1.10.405.10">
    <property type="entry name" value="Guanine Nucleotide Dissociation Inhibitor, domain 1"/>
    <property type="match status" value="1"/>
</dbReference>
<dbReference type="InterPro" id="IPR002937">
    <property type="entry name" value="Amino_oxidase"/>
</dbReference>
<dbReference type="InterPro" id="IPR036188">
    <property type="entry name" value="FAD/NAD-bd_sf"/>
</dbReference>
<dbReference type="InterPro" id="IPR050281">
    <property type="entry name" value="Flavin_monoamine_oxidase"/>
</dbReference>
<dbReference type="PANTHER" id="PTHR10742:SF355">
    <property type="entry name" value="AMINE OXIDASE"/>
    <property type="match status" value="1"/>
</dbReference>
<dbReference type="PANTHER" id="PTHR10742">
    <property type="entry name" value="FLAVIN MONOAMINE OXIDASE"/>
    <property type="match status" value="1"/>
</dbReference>
<dbReference type="Pfam" id="PF01593">
    <property type="entry name" value="Amino_oxidase"/>
    <property type="match status" value="1"/>
</dbReference>
<dbReference type="SUPFAM" id="SSF54373">
    <property type="entry name" value="FAD-linked reductases, C-terminal domain"/>
    <property type="match status" value="1"/>
</dbReference>
<dbReference type="SUPFAM" id="SSF51905">
    <property type="entry name" value="FAD/NAD(P)-binding domain"/>
    <property type="match status" value="1"/>
</dbReference>
<reference key="1">
    <citation type="journal article" date="2013" name="Toxicon">
        <title>Cloning and characterization of an antibacterial L-amino acid oxidase from Crotalus durissus cumanensis venom.</title>
        <authorList>
            <person name="Vargas L.J."/>
            <person name="Quintana J.C."/>
            <person name="Pereanez J.A."/>
            <person name="Nunez V."/>
            <person name="Sanz L."/>
            <person name="Calvete J.J."/>
        </authorList>
    </citation>
    <scope>NUCLEOTIDE SEQUENCE [MRNA]</scope>
    <scope>IDENTIFICATION BY MASS SPECTROMETRY</scope>
    <scope>FUNCTION</scope>
    <scope>CATALYTIC ACTIVITY</scope>
    <scope>3D-STRUCTURE MODELING</scope>
    <source>
        <tissue>Venom</tissue>
        <tissue>Venom gland</tissue>
    </source>
</reference>
<reference key="2">
    <citation type="journal article" date="2010" name="J. Proteome Res.">
        <title>Snake venomics of the Central American rattlesnake Crotalus simus and the South American Crotalus durissus complex points to neurotoxicity as an adaptive paedomorphic trend along Crotalus dispersal in South America.</title>
        <authorList>
            <person name="Calvete J.J."/>
            <person name="Sanz L."/>
            <person name="Cid P."/>
            <person name="de la Torre P."/>
            <person name="Flores-Diaz M."/>
            <person name="Dos Santos M.C."/>
            <person name="Borges A."/>
            <person name="Bremo A."/>
            <person name="Angulo Y."/>
            <person name="Lomonte B."/>
            <person name="Alape-Giron A."/>
            <person name="Gutierrez J.M."/>
        </authorList>
    </citation>
    <scope>PROTEIN SEQUENCE OF 3-17</scope>
    <scope>IDENTIFICATION BY MASS SPECTROMETRY</scope>
    <scope>SUBCELLULAR LOCATION</scope>
    <source>
        <tissue>Venom</tissue>
    </source>
</reference>
<evidence type="ECO:0000250" key="1">
    <source>
        <dbReference type="UniProtKB" id="P56742"/>
    </source>
</evidence>
<evidence type="ECO:0000250" key="2">
    <source>
        <dbReference type="UniProtKB" id="P81382"/>
    </source>
</evidence>
<evidence type="ECO:0000255" key="3">
    <source>
        <dbReference type="PROSITE-ProRule" id="PRU00498"/>
    </source>
</evidence>
<evidence type="ECO:0000269" key="4">
    <source>
    </source>
</evidence>
<evidence type="ECO:0000269" key="5">
    <source>
    </source>
</evidence>
<evidence type="ECO:0000303" key="6">
    <source>
    </source>
</evidence>
<evidence type="ECO:0000303" key="7">
    <source>
    </source>
</evidence>
<evidence type="ECO:0000305" key="8">
    <source>
    </source>
</evidence>
<evidence type="ECO:0000305" key="9">
    <source>
    </source>
</evidence>
<keyword id="KW-0044">Antibiotic</keyword>
<keyword id="KW-0929">Antimicrobial</keyword>
<keyword id="KW-0903">Direct protein sequencing</keyword>
<keyword id="KW-1015">Disulfide bond</keyword>
<keyword id="KW-0274">FAD</keyword>
<keyword id="KW-0285">Flavoprotein</keyword>
<keyword id="KW-0325">Glycoprotein</keyword>
<keyword id="KW-0560">Oxidoreductase</keyword>
<keyword id="KW-0964">Secreted</keyword>
<keyword id="KW-0732">Signal</keyword>
<name>OXLA_CRODM</name>
<feature type="signal peptide" evidence="4">
    <location>
        <begin position="1" status="less than"/>
        <end position="2"/>
    </location>
</feature>
<feature type="chain" id="PRO_0000430748" description="L-amino acid oxidase Cdc18">
    <location>
        <begin position="3"/>
        <end position="498"/>
    </location>
</feature>
<feature type="binding site" evidence="2">
    <location>
        <begin position="45"/>
        <end position="46"/>
    </location>
    <ligand>
        <name>FAD</name>
        <dbReference type="ChEBI" id="CHEBI:57692"/>
    </ligand>
</feature>
<feature type="binding site" evidence="2">
    <location>
        <begin position="65"/>
        <end position="66"/>
    </location>
    <ligand>
        <name>FAD</name>
        <dbReference type="ChEBI" id="CHEBI:57692"/>
    </ligand>
</feature>
<feature type="binding site" evidence="2">
    <location>
        <position position="73"/>
    </location>
    <ligand>
        <name>FAD</name>
        <dbReference type="ChEBI" id="CHEBI:57692"/>
    </ligand>
</feature>
<feature type="binding site" evidence="2">
    <location>
        <begin position="87"/>
        <end position="90"/>
    </location>
    <ligand>
        <name>FAD</name>
        <dbReference type="ChEBI" id="CHEBI:57692"/>
    </ligand>
</feature>
<feature type="binding site" evidence="2">
    <location>
        <position position="90"/>
    </location>
    <ligand>
        <name>substrate</name>
    </ligand>
</feature>
<feature type="binding site" evidence="2">
    <location>
        <position position="223"/>
    </location>
    <ligand>
        <name>substrate</name>
    </ligand>
</feature>
<feature type="binding site" evidence="2">
    <location>
        <position position="263"/>
    </location>
    <ligand>
        <name>FAD</name>
        <dbReference type="ChEBI" id="CHEBI:57692"/>
    </ligand>
</feature>
<feature type="binding site" evidence="2">
    <location>
        <position position="374"/>
    </location>
    <ligand>
        <name>substrate</name>
    </ligand>
</feature>
<feature type="binding site" evidence="2">
    <location>
        <position position="459"/>
    </location>
    <ligand>
        <name>FAD</name>
        <dbReference type="ChEBI" id="CHEBI:57692"/>
    </ligand>
</feature>
<feature type="binding site" evidence="2">
    <location>
        <begin position="466"/>
        <end position="471"/>
    </location>
    <ligand>
        <name>FAD</name>
        <dbReference type="ChEBI" id="CHEBI:57692"/>
    </ligand>
</feature>
<feature type="binding site" evidence="2">
    <location>
        <begin position="466"/>
        <end position="467"/>
    </location>
    <ligand>
        <name>substrate</name>
    </ligand>
</feature>
<feature type="glycosylation site" description="N-linked (GlcNAc...) asparagine" evidence="3">
    <location>
        <position position="363"/>
    </location>
</feature>
<feature type="disulfide bond" evidence="2">
    <location>
        <begin position="12"/>
        <end position="173"/>
    </location>
</feature>
<feature type="disulfide bond" evidence="2">
    <location>
        <begin position="333"/>
        <end position="414"/>
    </location>
</feature>
<feature type="non-terminal residue" evidence="7">
    <location>
        <position position="1"/>
    </location>
</feature>
<sequence length="498" mass="56827">SCADDRNPLEECFRETDYEEFLEIARNGLTVTSNPKHVVIVGAGMAGLSAAYVLAGAGHQVTVLEASERVGGRVRTYRKKDWYANLGPMRLPTKHRIVREYIRKFGLQLNEFFQENENAWYFIKNIRKRVREVKNNPGILEYPVKPSEEGKSAAQLYVESLRKVVKELKRTNCKYILDKYDTYSTKEYLLKEGNLSPGAVDMIGDLLNEDSGYYVSFIESLKHDDIFGYEKRFDEIVGGMDQLPTSMYEAIKEKVQVHFNARVIEIQQNDRETKVTYQTSANEMPSVTADYVIVCTTSRAARRIKFEPPLPPKKAHALRSVHYRSGTKIFLTCKRKFWEDDGIRGGKSTTDLPSRFIYYPNHNFTSGVGVIIAYGIGDDANFFQALDFKDCADIVINDLSLIHQLPKEDIQTFCRPSMIQRWSLDKYAMGGITTFTPYQFQHFSEALTAPFKRIYFAGEYTAQFHGWIDSTIKSGLTAARDVNRASENPSGIHLSNDN</sequence>
<protein>
    <recommendedName>
        <fullName evidence="6">L-amino acid oxidase Cdc18</fullName>
    </recommendedName>
    <alternativeName>
        <fullName evidence="7">CdcLAAO</fullName>
        <shortName>LAO</shortName>
        <ecNumber evidence="5">1.4.3.2</ecNumber>
    </alternativeName>
</protein>